<name>MOBA_PHOPR</name>
<sequence>MPSAEQTSWVILAGGQASRMGGNDKGLVELTGKAMIEHVIGTLSPQTSSITINANRNQERYSQYGSVFGDNIQDYPGPLGGIHAAIHHLDDEWIGFVPCDCPQLPHDLVERMANACSEDTDIAVAHDGEHIQPVVTLLHRRILPKLEAFLANGDRKIILLYRQCNMITVDFSDQPNAFVNLNTPEELQQFGQTL</sequence>
<reference key="1">
    <citation type="journal article" date="2005" name="Science">
        <title>Life at depth: Photobacterium profundum genome sequence and expression analysis.</title>
        <authorList>
            <person name="Vezzi A."/>
            <person name="Campanaro S."/>
            <person name="D'Angelo M."/>
            <person name="Simonato F."/>
            <person name="Vitulo N."/>
            <person name="Lauro F.M."/>
            <person name="Cestaro A."/>
            <person name="Malacrida G."/>
            <person name="Simionati B."/>
            <person name="Cannata N."/>
            <person name="Romualdi C."/>
            <person name="Bartlett D.H."/>
            <person name="Valle G."/>
        </authorList>
    </citation>
    <scope>NUCLEOTIDE SEQUENCE [LARGE SCALE GENOMIC DNA]</scope>
    <source>
        <strain>ATCC BAA-1253 / SS9</strain>
    </source>
</reference>
<gene>
    <name evidence="1" type="primary">mobA</name>
    <name type="ordered locus">PBPRA1892</name>
</gene>
<comment type="function">
    <text evidence="1">Transfers a GMP moiety from GTP to Mo-molybdopterin (Mo-MPT) cofactor (Moco or molybdenum cofactor) to form Mo-molybdopterin guanine dinucleotide (Mo-MGD) cofactor.</text>
</comment>
<comment type="catalytic activity">
    <reaction evidence="1">
        <text>Mo-molybdopterin + GTP + H(+) = Mo-molybdopterin guanine dinucleotide + diphosphate</text>
        <dbReference type="Rhea" id="RHEA:34243"/>
        <dbReference type="ChEBI" id="CHEBI:15378"/>
        <dbReference type="ChEBI" id="CHEBI:33019"/>
        <dbReference type="ChEBI" id="CHEBI:37565"/>
        <dbReference type="ChEBI" id="CHEBI:71302"/>
        <dbReference type="ChEBI" id="CHEBI:71310"/>
        <dbReference type="EC" id="2.7.7.77"/>
    </reaction>
</comment>
<comment type="cofactor">
    <cofactor evidence="1">
        <name>Mg(2+)</name>
        <dbReference type="ChEBI" id="CHEBI:18420"/>
    </cofactor>
</comment>
<comment type="subunit">
    <text evidence="1">Monomer.</text>
</comment>
<comment type="subcellular location">
    <subcellularLocation>
        <location evidence="1">Cytoplasm</location>
    </subcellularLocation>
</comment>
<comment type="domain">
    <text evidence="1">The N-terminal domain determines nucleotide recognition and specific binding, while the C-terminal domain determines the specific binding to the target protein.</text>
</comment>
<comment type="similarity">
    <text evidence="1">Belongs to the MobA family.</text>
</comment>
<keyword id="KW-0963">Cytoplasm</keyword>
<keyword id="KW-0342">GTP-binding</keyword>
<keyword id="KW-0460">Magnesium</keyword>
<keyword id="KW-0479">Metal-binding</keyword>
<keyword id="KW-0501">Molybdenum cofactor biosynthesis</keyword>
<keyword id="KW-0547">Nucleotide-binding</keyword>
<keyword id="KW-1185">Reference proteome</keyword>
<keyword id="KW-0808">Transferase</keyword>
<proteinExistence type="inferred from homology"/>
<dbReference type="EC" id="2.7.7.77" evidence="1"/>
<dbReference type="EMBL" id="CR378669">
    <property type="protein sequence ID" value="CAG20296.1"/>
    <property type="molecule type" value="Genomic_DNA"/>
</dbReference>
<dbReference type="RefSeq" id="WP_011218600.1">
    <property type="nucleotide sequence ID" value="NC_006370.1"/>
</dbReference>
<dbReference type="SMR" id="Q6LQY0"/>
<dbReference type="STRING" id="298386.PBPRA1892"/>
<dbReference type="KEGG" id="ppr:PBPRA1892"/>
<dbReference type="eggNOG" id="COG0746">
    <property type="taxonomic scope" value="Bacteria"/>
</dbReference>
<dbReference type="HOGENOM" id="CLU_055597_5_1_6"/>
<dbReference type="Proteomes" id="UP000000593">
    <property type="component" value="Chromosome 1"/>
</dbReference>
<dbReference type="GO" id="GO:0005737">
    <property type="term" value="C:cytoplasm"/>
    <property type="evidence" value="ECO:0007669"/>
    <property type="project" value="UniProtKB-SubCell"/>
</dbReference>
<dbReference type="GO" id="GO:0005525">
    <property type="term" value="F:GTP binding"/>
    <property type="evidence" value="ECO:0007669"/>
    <property type="project" value="UniProtKB-UniRule"/>
</dbReference>
<dbReference type="GO" id="GO:0046872">
    <property type="term" value="F:metal ion binding"/>
    <property type="evidence" value="ECO:0007669"/>
    <property type="project" value="UniProtKB-KW"/>
</dbReference>
<dbReference type="GO" id="GO:0061603">
    <property type="term" value="F:molybdenum cofactor guanylyltransferase activity"/>
    <property type="evidence" value="ECO:0007669"/>
    <property type="project" value="UniProtKB-EC"/>
</dbReference>
<dbReference type="GO" id="GO:1902758">
    <property type="term" value="P:bis(molybdopterin guanine dinucleotide)molybdenum biosynthetic process"/>
    <property type="evidence" value="ECO:0007669"/>
    <property type="project" value="TreeGrafter"/>
</dbReference>
<dbReference type="CDD" id="cd02503">
    <property type="entry name" value="MobA"/>
    <property type="match status" value="1"/>
</dbReference>
<dbReference type="Gene3D" id="3.90.550.10">
    <property type="entry name" value="Spore Coat Polysaccharide Biosynthesis Protein SpsA, Chain A"/>
    <property type="match status" value="1"/>
</dbReference>
<dbReference type="HAMAP" id="MF_00316">
    <property type="entry name" value="MobA"/>
    <property type="match status" value="1"/>
</dbReference>
<dbReference type="InterPro" id="IPR025877">
    <property type="entry name" value="MobA-like_NTP_Trfase"/>
</dbReference>
<dbReference type="InterPro" id="IPR013482">
    <property type="entry name" value="Molybde_CF_guanTrfase"/>
</dbReference>
<dbReference type="InterPro" id="IPR029044">
    <property type="entry name" value="Nucleotide-diphossugar_trans"/>
</dbReference>
<dbReference type="NCBIfam" id="TIGR02665">
    <property type="entry name" value="molyb_mobA"/>
    <property type="match status" value="1"/>
</dbReference>
<dbReference type="PANTHER" id="PTHR19136">
    <property type="entry name" value="MOLYBDENUM COFACTOR GUANYLYLTRANSFERASE"/>
    <property type="match status" value="1"/>
</dbReference>
<dbReference type="PANTHER" id="PTHR19136:SF81">
    <property type="entry name" value="MOLYBDENUM COFACTOR GUANYLYLTRANSFERASE"/>
    <property type="match status" value="1"/>
</dbReference>
<dbReference type="Pfam" id="PF12804">
    <property type="entry name" value="NTP_transf_3"/>
    <property type="match status" value="1"/>
</dbReference>
<dbReference type="SUPFAM" id="SSF53448">
    <property type="entry name" value="Nucleotide-diphospho-sugar transferases"/>
    <property type="match status" value="1"/>
</dbReference>
<evidence type="ECO:0000255" key="1">
    <source>
        <dbReference type="HAMAP-Rule" id="MF_00316"/>
    </source>
</evidence>
<accession>Q6LQY0</accession>
<organism>
    <name type="scientific">Photobacterium profundum (strain SS9)</name>
    <dbReference type="NCBI Taxonomy" id="298386"/>
    <lineage>
        <taxon>Bacteria</taxon>
        <taxon>Pseudomonadati</taxon>
        <taxon>Pseudomonadota</taxon>
        <taxon>Gammaproteobacteria</taxon>
        <taxon>Vibrionales</taxon>
        <taxon>Vibrionaceae</taxon>
        <taxon>Photobacterium</taxon>
    </lineage>
</organism>
<protein>
    <recommendedName>
        <fullName evidence="1">Molybdenum cofactor guanylyltransferase</fullName>
        <shortName evidence="1">MoCo guanylyltransferase</shortName>
        <ecNumber evidence="1">2.7.7.77</ecNumber>
    </recommendedName>
    <alternativeName>
        <fullName evidence="1">GTP:molybdopterin guanylyltransferase</fullName>
    </alternativeName>
    <alternativeName>
        <fullName evidence="1">Mo-MPT guanylyltransferase</fullName>
    </alternativeName>
    <alternativeName>
        <fullName evidence="1">Molybdopterin guanylyltransferase</fullName>
    </alternativeName>
    <alternativeName>
        <fullName evidence="1">Molybdopterin-guanine dinucleotide synthase</fullName>
        <shortName evidence="1">MGD synthase</shortName>
    </alternativeName>
</protein>
<feature type="chain" id="PRO_1000019130" description="Molybdenum cofactor guanylyltransferase">
    <location>
        <begin position="1"/>
        <end position="194"/>
    </location>
</feature>
<feature type="binding site" evidence="1">
    <location>
        <begin position="12"/>
        <end position="14"/>
    </location>
    <ligand>
        <name>GTP</name>
        <dbReference type="ChEBI" id="CHEBI:37565"/>
    </ligand>
</feature>
<feature type="binding site" evidence="1">
    <location>
        <position position="25"/>
    </location>
    <ligand>
        <name>GTP</name>
        <dbReference type="ChEBI" id="CHEBI:37565"/>
    </ligand>
</feature>
<feature type="binding site" evidence="1">
    <location>
        <position position="53"/>
    </location>
    <ligand>
        <name>GTP</name>
        <dbReference type="ChEBI" id="CHEBI:37565"/>
    </ligand>
</feature>
<feature type="binding site" evidence="1">
    <location>
        <position position="70"/>
    </location>
    <ligand>
        <name>GTP</name>
        <dbReference type="ChEBI" id="CHEBI:37565"/>
    </ligand>
</feature>
<feature type="binding site" evidence="1">
    <location>
        <position position="100"/>
    </location>
    <ligand>
        <name>GTP</name>
        <dbReference type="ChEBI" id="CHEBI:37565"/>
    </ligand>
</feature>
<feature type="binding site" evidence="1">
    <location>
        <position position="100"/>
    </location>
    <ligand>
        <name>Mg(2+)</name>
        <dbReference type="ChEBI" id="CHEBI:18420"/>
    </ligand>
</feature>